<organism>
    <name type="scientific">Human adenovirus C serotype 2</name>
    <name type="common">HAdV-2</name>
    <name type="synonym">Human adenovirus 2</name>
    <dbReference type="NCBI Taxonomy" id="10515"/>
    <lineage>
        <taxon>Viruses</taxon>
        <taxon>Varidnaviria</taxon>
        <taxon>Bamfordvirae</taxon>
        <taxon>Preplasmiviricota</taxon>
        <taxon>Tectiliviricetes</taxon>
        <taxon>Rowavirales</taxon>
        <taxon>Adenoviridae</taxon>
        <taxon>Mastadenovirus</taxon>
        <taxon>Human mastadenovirus C</taxon>
    </lineage>
</organism>
<dbReference type="EMBL" id="J01917">
    <property type="protein sequence ID" value="AAA92212.1"/>
    <property type="molecule type" value="Genomic_DNA"/>
</dbReference>
<dbReference type="PIR" id="C03837">
    <property type="entry name" value="FOAD72"/>
</dbReference>
<dbReference type="RefSeq" id="AP_000171.1">
    <property type="nucleotide sequence ID" value="AC_000007.1"/>
</dbReference>
<dbReference type="RefSeq" id="NP_040522.1">
    <property type="nucleotide sequence ID" value="NC_001405.1"/>
</dbReference>
<dbReference type="SMR" id="P68950"/>
<dbReference type="iPTMnet" id="P68950"/>
<dbReference type="GeneID" id="2652996"/>
<dbReference type="Proteomes" id="UP000008167">
    <property type="component" value="Segment"/>
</dbReference>
<dbReference type="GO" id="GO:0043657">
    <property type="term" value="C:host cell"/>
    <property type="evidence" value="ECO:0007669"/>
    <property type="project" value="GOC"/>
</dbReference>
<dbReference type="GO" id="GO:0044196">
    <property type="term" value="C:host cell nucleolus"/>
    <property type="evidence" value="ECO:0007669"/>
    <property type="project" value="UniProtKB-SubCell"/>
</dbReference>
<dbReference type="GO" id="GO:0019028">
    <property type="term" value="C:viral capsid"/>
    <property type="evidence" value="ECO:0007669"/>
    <property type="project" value="InterPro"/>
</dbReference>
<dbReference type="GO" id="GO:0003677">
    <property type="term" value="F:DNA binding"/>
    <property type="evidence" value="ECO:0007669"/>
    <property type="project" value="UniProtKB-UniRule"/>
</dbReference>
<dbReference type="GO" id="GO:0046718">
    <property type="term" value="P:symbiont entry into host cell"/>
    <property type="evidence" value="ECO:0007669"/>
    <property type="project" value="UniProtKB-UniRule"/>
</dbReference>
<dbReference type="GO" id="GO:0075732">
    <property type="term" value="P:viral penetration into host nucleus"/>
    <property type="evidence" value="ECO:0007669"/>
    <property type="project" value="UniProtKB-UniRule"/>
</dbReference>
<dbReference type="HAMAP" id="MF_04056">
    <property type="entry name" value="ADV_PVII"/>
    <property type="match status" value="1"/>
</dbReference>
<dbReference type="InterPro" id="IPR004912">
    <property type="entry name" value="Adeno_VII"/>
</dbReference>
<dbReference type="Pfam" id="PF03228">
    <property type="entry name" value="Adeno_VII"/>
    <property type="match status" value="1"/>
</dbReference>
<reference key="1">
    <citation type="journal article" date="1983" name="Proc. Natl. Acad. Sci. U.S.A.">
        <title>Gene and protein sequences of adenovirus protein VII, a hybrid basic chromosomal protein.</title>
        <authorList>
            <person name="Sung M.T."/>
            <person name="Cao T.M."/>
            <person name="Coleman R.T."/>
            <person name="Budelier K.A."/>
        </authorList>
    </citation>
    <scope>NUCLEOTIDE SEQUENCE [GENOMIC DNA]</scope>
    <scope>PROTEIN SEQUENCE OF 2-165 AND 170-196</scope>
    <scope>ACETYLATION AT SER-2</scope>
    <scope>PROTEOLYTIC PROCESSING</scope>
</reference>
<reference key="2">
    <citation type="journal article" date="1984" name="J. Biol. Chem.">
        <title>Genes encoding the core proteins of adenovirus type 2.</title>
        <authorList>
            <person name="Alestroem P."/>
            <person name="Akusjaervi G."/>
            <person name="Lager M."/>
            <person name="Yeh-kai L."/>
            <person name="Pettersson U."/>
        </authorList>
    </citation>
    <scope>NUCLEOTIDE SEQUENCE [GENOMIC DNA]</scope>
    <scope>PROTEOLYTIC PROCESSING</scope>
</reference>
<reference key="3">
    <citation type="journal article" date="2012" name="Virology">
        <title>The phosphoproteome of the adenovirus type 2 virion.</title>
        <authorList>
            <person name="Bergstrom Lind S."/>
            <person name="Artemenko K.A."/>
            <person name="Elfineh L."/>
            <person name="Zhao Y."/>
            <person name="Bergquist J."/>
            <person name="Pettersson U."/>
        </authorList>
    </citation>
    <scope>PROTEIN SEQUENCE OF 70-90 AND 182-188</scope>
    <scope>PHOSPHORYLATION AT THR-74 AND SER-185</scope>
</reference>
<reference key="4">
    <citation type="journal article" date="1982" name="J. Gen. Virol.">
        <title>Nucleic acid-binding properties of adenovirus structural polypeptides.</title>
        <authorList>
            <person name="Russell W.C."/>
            <person name="Precious B."/>
        </authorList>
    </citation>
    <scope>DNA-BINDING</scope>
    <source>
        <strain>Human adenovirus C serotype 5</strain>
    </source>
</reference>
<reference key="5">
    <citation type="journal article" date="1985" name="J. Virol.">
        <title>Interactions among the three adenovirus core proteins.</title>
        <authorList>
            <person name="Chatterjee P.K."/>
            <person name="Vayda M.E."/>
            <person name="Flint S.J."/>
        </authorList>
    </citation>
    <scope>INTERACTION WITH THE CORE-CAPSID BRIDGING PROTEIN</scope>
</reference>
<reference key="6">
    <citation type="journal article" date="2003" name="J. Gen. Virol.">
        <title>Adenovirus core protein VII contains distinct sequences that mediate targeting to the nucleus and nucleolus, and colocalization with human chromosomes.</title>
        <authorList>
            <person name="Lee T.W."/>
            <person name="Blair G.E."/>
            <person name="Matthews D.A."/>
        </authorList>
    </citation>
    <scope>SUBCELLULAR LOCATION</scope>
</reference>
<reference key="7">
    <citation type="journal article" date="2004" name="J. Virol.">
        <title>Adenovirus protein VII condenses DNA, represses transcription, and associates with transcriptional activator E1A.</title>
        <authorList>
            <person name="Johnson J.S."/>
            <person name="Osheim Y.N."/>
            <person name="Xue Y."/>
            <person name="Emanuel M.R."/>
            <person name="Lewis P.W."/>
            <person name="Bankovich A."/>
            <person name="Beyer A.L."/>
            <person name="Engel D.A."/>
        </authorList>
    </citation>
    <scope>FUNCTION</scope>
</reference>
<reference key="8">
    <citation type="journal article" date="2006" name="J. Virol.">
        <title>Adenovirus core protein pVII is translocated into the nucleus by multiple import receptor pathways.</title>
        <authorList>
            <person name="Wodrich H."/>
            <person name="Cassany A."/>
            <person name="D'Angelo M.A."/>
            <person name="Guan T."/>
            <person name="Nemerow G."/>
            <person name="Gerace L."/>
        </authorList>
    </citation>
    <scope>FUNCTION</scope>
    <scope>NUCLEAR LOCALIZATION SIGNALS</scope>
</reference>
<reference key="9">
    <citation type="journal article" date="2007" name="Traffic">
        <title>A role for transportin in the nuclear import of adenovirus core proteins and DNA.</title>
        <authorList>
            <person name="Hindley C.E."/>
            <person name="Lawrence F.J."/>
            <person name="Matthews D.A."/>
        </authorList>
    </citation>
    <scope>FUNCTION</scope>
</reference>
<reference key="10">
    <citation type="journal article" date="2007" name="FEBS Lett.">
        <title>Physical and functional interaction between a nucleolar protein nucleophosmin/B23 and adenovirus basic core proteins.</title>
        <authorList>
            <person name="Samad M.A."/>
            <person name="Okuwaki M."/>
            <person name="Haruki H."/>
            <person name="Nagata K."/>
        </authorList>
    </citation>
    <scope>INTERACTION WITH HOST NPM1</scope>
</reference>
<reference key="11">
    <citation type="journal article" date="2012" name="Viruses">
        <title>Latest insights on adenovirus structure and assembly.</title>
        <authorList>
            <person name="San Martin C."/>
        </authorList>
    </citation>
    <scope>REVIEW</scope>
</reference>
<reference key="12">
    <citation type="journal article" date="2012" name="Nucleic Acids Res.">
        <title>Chromatin structure of adenovirus DNA throughout infection.</title>
        <authorList>
            <person name="Giberson A.N."/>
            <person name="Davidson A.R."/>
            <person name="Parks R.J."/>
        </authorList>
    </citation>
    <scope>REVIEW</scope>
</reference>
<reference key="13">
    <citation type="journal article" date="2016" name="Nature">
        <title>A core viral protein binds host nucleosomes to sequester immune danger signals.</title>
        <authorList>
            <person name="Avgousti D.C."/>
            <person name="Herrmann C."/>
            <person name="Kulej K."/>
            <person name="Pancholi N.J."/>
            <person name="Sekulic N."/>
            <person name="Petrescu J."/>
            <person name="Molden R.C."/>
            <person name="Blumenthal D."/>
            <person name="Paris A.J."/>
            <person name="Reyes E.D."/>
            <person name="Ostapchuk P."/>
            <person name="Hearing P."/>
            <person name="Seeholzer S.H."/>
            <person name="Worthen G.S."/>
            <person name="Black B.E."/>
            <person name="Garcia B.A."/>
            <person name="Weitzman M.D."/>
        </authorList>
    </citation>
    <scope>FUNCTION</scope>
    <scope>INTERACTION WITH HOST HMGB1</scope>
    <scope>SUBCELLULAR LOCATION</scope>
    <scope>ACETYLATION AT LYS-27 AND LYS-48</scope>
    <scope>PHOSPHORYLATION AT THR-55; THR-74 AND SER-183</scope>
</reference>
<organismHost>
    <name type="scientific">Homo sapiens</name>
    <name type="common">Human</name>
    <dbReference type="NCBI Taxonomy" id="9606"/>
</organismHost>
<keyword id="KW-0007">Acetylation</keyword>
<keyword id="KW-0903">Direct protein sequencing</keyword>
<keyword id="KW-0238">DNA-binding</keyword>
<keyword id="KW-1048">Host nucleus</keyword>
<keyword id="KW-0945">Host-virus interaction</keyword>
<keyword id="KW-0426">Late protein</keyword>
<keyword id="KW-0597">Phosphoprotein</keyword>
<keyword id="KW-1185">Reference proteome</keyword>
<keyword id="KW-1163">Viral penetration into host nucleus</keyword>
<keyword id="KW-0946">Virion</keyword>
<keyword id="KW-1160">Virus entry into host cell</keyword>
<proteinExistence type="evidence at protein level"/>
<protein>
    <recommendedName>
        <fullName evidence="1">Pre-histone-like nucleoprotein</fullName>
    </recommendedName>
    <alternativeName>
        <fullName evidence="1">Pre-core protein VII</fullName>
        <shortName evidence="1">pVII</shortName>
    </alternativeName>
    <component>
        <recommendedName>
            <fullName evidence="1">Histone-like nucleoprotein</fullName>
            <shortName evidence="1">NP</shortName>
        </recommendedName>
        <alternativeName>
            <fullName evidence="1">Core protein VII</fullName>
        </alternativeName>
    </component>
</protein>
<accession>P68950</accession>
<accession>P03266</accession>
<accession>P12542</accession>
<gene>
    <name evidence="1" type="primary">L2</name>
</gene>
<comment type="function">
    <text evidence="1 3 4 6 8">Plays a role in the inhibition of host immune response within the nucleus. Interacts with cellular nucleosomes and immobilizes the host immune danger signal HMGB1 on chromatin. In turn, prevents HMGB1 release out of the cell and thus decreases inflammation. Also plays a role in the wrapping and condensation of the viral DNA. May also promote viral genome import into the nucleus.</text>
</comment>
<comment type="subunit">
    <text evidence="1 5 8 9">Interacts with the core-capsid bridging protein; this interaction bridges the virus core to the capsid. Interacts with host NPM1; this interaction might play a role in placing the pre-histone-like nucleoprotein on the viral DNA or regulating viral gene expression. Interacts with host HMGB1; this interaction inhibits host immune response.</text>
</comment>
<comment type="subcellular location">
    <molecule>Histone-like nucleoprotein</molecule>
    <subcellularLocation>
        <location evidence="1">Virion</location>
    </subcellularLocation>
    <text evidence="1">Located inside the capsid in association with the viral DNA (core). Present in about 1070 copies per virion.</text>
</comment>
<comment type="subcellular location">
    <molecule>Pre-histone-like nucleoprotein</molecule>
    <subcellularLocation>
        <location evidence="1 8">Host nucleus</location>
        <location evidence="1 8">Host nucleolus</location>
    </subcellularLocation>
</comment>
<comment type="induction">
    <text evidence="1">Expressed in the late phase of the viral replicative cycle.</text>
</comment>
<comment type="PTM">
    <text evidence="1">Cleaved near the N-terminus by the viral protease during virion maturation to form the mature protein.</text>
</comment>
<comment type="miscellaneous">
    <text evidence="1">All late proteins expressed from the major late promoter are produced by alternative splicing and alternative polyadenylation of the same gene giving rise to non-overlapping ORFs. A leader sequence is present in the N-terminus of all these mRNAs and is recognized by the viral shutoff protein to provide expression although conventional translation via ribosome scanning from the cap has been shut off in the host cell.</text>
</comment>
<comment type="similarity">
    <text evidence="1 11">Belongs to the adenoviridae histone-like nucleoprotein family.</text>
</comment>
<evidence type="ECO:0000255" key="1">
    <source>
        <dbReference type="HAMAP-Rule" id="MF_04056"/>
    </source>
</evidence>
<evidence type="ECO:0000256" key="2">
    <source>
        <dbReference type="SAM" id="MobiDB-lite"/>
    </source>
</evidence>
<evidence type="ECO:0000269" key="3">
    <source>
    </source>
</evidence>
<evidence type="ECO:0000269" key="4">
    <source>
    </source>
</evidence>
<evidence type="ECO:0000269" key="5">
    <source>
    </source>
</evidence>
<evidence type="ECO:0000269" key="6">
    <source>
    </source>
</evidence>
<evidence type="ECO:0000269" key="7">
    <source>
    </source>
</evidence>
<evidence type="ECO:0000269" key="8">
    <source>
    </source>
</evidence>
<evidence type="ECO:0000269" key="9">
    <source>
    </source>
</evidence>
<evidence type="ECO:0000269" key="10">
    <source>
    </source>
</evidence>
<evidence type="ECO:0000305" key="11"/>
<name>NP_ADE02</name>
<sequence>MSILISPSNNTGWGLRFPSKMFGGAKKRSDQHPVRVRGHYRAPWGAHKRGRTGRTTVDDAIDAVVEEARNYTPTPPPVSTVDAAIQTVVRGARRYAKMKRRRRRVARRHRRRPGTAAQRAAAALLNRARRTGRRAAMRAARRLAAGIVTVPPRSRRRAAAAAAAAISAMTQGRRGNVYWVRDSVSGLRVPVRTRPPRN</sequence>
<feature type="initiator methionine" description="Removed" evidence="1 10">
    <location>
        <position position="1"/>
    </location>
</feature>
<feature type="chain" id="PRO_0000421079" description="Pre-histone-like nucleoprotein" evidence="1">
    <location>
        <begin position="2"/>
        <end position="198"/>
    </location>
</feature>
<feature type="propeptide" id="PRO_0000036575" evidence="1">
    <location>
        <begin position="2"/>
        <end position="24"/>
    </location>
</feature>
<feature type="chain" id="PRO_0000036576" description="Histone-like nucleoprotein" evidence="1">
    <location>
        <begin position="25"/>
        <end position="198"/>
    </location>
</feature>
<feature type="region of interest" description="Disordered" evidence="2">
    <location>
        <begin position="24"/>
        <end position="55"/>
    </location>
</feature>
<feature type="short sequence motif" description="Nuclear localization signal" evidence="1">
    <location>
        <begin position="188"/>
        <end position="198"/>
    </location>
</feature>
<feature type="compositionally biased region" description="Basic residues" evidence="2">
    <location>
        <begin position="34"/>
        <end position="52"/>
    </location>
</feature>
<feature type="site" description="Cleavage; by viral protease" evidence="1">
    <location>
        <begin position="24"/>
        <end position="25"/>
    </location>
</feature>
<feature type="modified residue" description="N-acetylserine; by host" evidence="1 10">
    <location>
        <position position="2"/>
    </location>
</feature>
<feature type="modified residue" description="N6-acetyllysine; by host" evidence="1 8">
    <location>
        <position position="27"/>
    </location>
</feature>
<feature type="modified residue" description="N6-acetyllysine; by host" evidence="1 8">
    <location>
        <position position="48"/>
    </location>
</feature>
<feature type="modified residue" description="Phosphothreonine; by host" evidence="1 8">
    <location>
        <position position="55"/>
    </location>
</feature>
<feature type="modified residue" description="Phosphothreonine; by host" evidence="1 7 8">
    <location>
        <position position="74"/>
    </location>
</feature>
<feature type="modified residue" description="Phosphoserine; by host" evidence="1 8">
    <location>
        <position position="183"/>
    </location>
</feature>
<feature type="modified residue" description="Phosphoserine; by host" evidence="1 7">
    <location>
        <position position="185"/>
    </location>
</feature>
<feature type="sequence conflict" description="In Ref. 1; no nucleotide entry." evidence="11" ref="1">
    <location>
        <position position="112"/>
    </location>
</feature>